<name>NU3M_MAMPR</name>
<evidence type="ECO:0000250" key="1">
    <source>
        <dbReference type="UniProtKB" id="P03897"/>
    </source>
</evidence>
<evidence type="ECO:0000250" key="2">
    <source>
        <dbReference type="UniProtKB" id="P03898"/>
    </source>
</evidence>
<evidence type="ECO:0000255" key="3"/>
<evidence type="ECO:0000305" key="4"/>
<proteinExistence type="inferred from homology"/>
<dbReference type="EC" id="7.1.1.2" evidence="1"/>
<dbReference type="EMBL" id="DQ188829">
    <property type="protein sequence ID" value="ABA29791.2"/>
    <property type="molecule type" value="Genomic_DNA"/>
</dbReference>
<dbReference type="EMBL" id="DQ316067">
    <property type="protein sequence ID" value="ABC17885.1"/>
    <property type="molecule type" value="Genomic_DNA"/>
</dbReference>
<dbReference type="RefSeq" id="YP_398761.3">
    <property type="nucleotide sequence ID" value="NC_007596.2"/>
</dbReference>
<dbReference type="SMR" id="Q38PR5"/>
<dbReference type="GeneID" id="3773148"/>
<dbReference type="CTD" id="4537"/>
<dbReference type="GO" id="GO:0005743">
    <property type="term" value="C:mitochondrial inner membrane"/>
    <property type="evidence" value="ECO:0000250"/>
    <property type="project" value="UniProtKB"/>
</dbReference>
<dbReference type="GO" id="GO:0030964">
    <property type="term" value="C:NADH dehydrogenase complex"/>
    <property type="evidence" value="ECO:0007669"/>
    <property type="project" value="TreeGrafter"/>
</dbReference>
<dbReference type="GO" id="GO:0008137">
    <property type="term" value="F:NADH dehydrogenase (ubiquinone) activity"/>
    <property type="evidence" value="ECO:0000250"/>
    <property type="project" value="UniProtKB"/>
</dbReference>
<dbReference type="GO" id="GO:0006120">
    <property type="term" value="P:mitochondrial electron transport, NADH to ubiquinone"/>
    <property type="evidence" value="ECO:0000250"/>
    <property type="project" value="UniProtKB"/>
</dbReference>
<dbReference type="FunFam" id="1.20.58.1610:FF:000004">
    <property type="entry name" value="NADH-quinone oxidoreductase subunit A"/>
    <property type="match status" value="1"/>
</dbReference>
<dbReference type="Gene3D" id="1.20.58.1610">
    <property type="entry name" value="NADH:ubiquinone/plastoquinone oxidoreductase, chain 3"/>
    <property type="match status" value="1"/>
</dbReference>
<dbReference type="InterPro" id="IPR000440">
    <property type="entry name" value="NADH_UbQ/plastoQ_OxRdtase_su3"/>
</dbReference>
<dbReference type="InterPro" id="IPR038430">
    <property type="entry name" value="NDAH_ubi_oxred_su3_sf"/>
</dbReference>
<dbReference type="PANTHER" id="PTHR11058">
    <property type="entry name" value="NADH-UBIQUINONE OXIDOREDUCTASE CHAIN 3"/>
    <property type="match status" value="1"/>
</dbReference>
<dbReference type="PANTHER" id="PTHR11058:SF9">
    <property type="entry name" value="NADH-UBIQUINONE OXIDOREDUCTASE CHAIN 3"/>
    <property type="match status" value="1"/>
</dbReference>
<dbReference type="Pfam" id="PF00507">
    <property type="entry name" value="Oxidored_q4"/>
    <property type="match status" value="1"/>
</dbReference>
<accession>Q38PR5</accession>
<accession>Q2I3I0</accession>
<sequence length="115" mass="13150">MNLMATLLTNTMLTSLMVLIAFWLPQTYTYSEKTSPYECGFDPMGSARLPFSMKFFLVAITFLLFDLEIALLLPLPWAIQANNTNLTLLMSFMLIILLAIGLAYEWLQKGLEWTK</sequence>
<gene>
    <name evidence="1" type="primary">MT-ND3</name>
    <name type="synonym">MTND3</name>
    <name type="synonym">NADH3</name>
    <name type="synonym">ND3</name>
</gene>
<keyword id="KW-0249">Electron transport</keyword>
<keyword id="KW-0952">Extinct organism protein</keyword>
<keyword id="KW-0472">Membrane</keyword>
<keyword id="KW-0496">Mitochondrion</keyword>
<keyword id="KW-0999">Mitochondrion inner membrane</keyword>
<keyword id="KW-0520">NAD</keyword>
<keyword id="KW-0679">Respiratory chain</keyword>
<keyword id="KW-1278">Translocase</keyword>
<keyword id="KW-0812">Transmembrane</keyword>
<keyword id="KW-1133">Transmembrane helix</keyword>
<keyword id="KW-0813">Transport</keyword>
<keyword id="KW-0830">Ubiquinone</keyword>
<feature type="chain" id="PRO_0000232851" description="NADH-ubiquinone oxidoreductase chain 3">
    <location>
        <begin position="1"/>
        <end position="115"/>
    </location>
</feature>
<feature type="transmembrane region" description="Helical" evidence="3">
    <location>
        <begin position="3"/>
        <end position="23"/>
    </location>
</feature>
<feature type="transmembrane region" description="Helical" evidence="3">
    <location>
        <begin position="55"/>
        <end position="75"/>
    </location>
</feature>
<feature type="transmembrane region" description="Helical" evidence="3">
    <location>
        <begin position="86"/>
        <end position="106"/>
    </location>
</feature>
<feature type="sequence conflict" description="In Ref. 1; ABA29791." evidence="4" ref="1">
    <original>A</original>
    <variation>T</variation>
    <location>
        <position position="5"/>
    </location>
</feature>
<feature type="sequence conflict" description="In Ref. 1; ABA29791." evidence="4" ref="1">
    <original>K</original>
    <variation>KYGT</variation>
    <location>
        <position position="115"/>
    </location>
</feature>
<comment type="function">
    <text evidence="1">Core subunit of the mitochondrial membrane respiratory chain NADH dehydrogenase (Complex I) which catalyzes electron transfer from NADH through the respiratory chain, using ubiquinone as an electron acceptor. Essential for the catalytic activity of complex I.</text>
</comment>
<comment type="catalytic activity">
    <reaction evidence="1">
        <text>a ubiquinone + NADH + 5 H(+)(in) = a ubiquinol + NAD(+) + 4 H(+)(out)</text>
        <dbReference type="Rhea" id="RHEA:29091"/>
        <dbReference type="Rhea" id="RHEA-COMP:9565"/>
        <dbReference type="Rhea" id="RHEA-COMP:9566"/>
        <dbReference type="ChEBI" id="CHEBI:15378"/>
        <dbReference type="ChEBI" id="CHEBI:16389"/>
        <dbReference type="ChEBI" id="CHEBI:17976"/>
        <dbReference type="ChEBI" id="CHEBI:57540"/>
        <dbReference type="ChEBI" id="CHEBI:57945"/>
        <dbReference type="EC" id="7.1.1.2"/>
    </reaction>
</comment>
<comment type="subunit">
    <text evidence="1">Core subunit of respiratory chain NADH dehydrogenase (Complex I) which is composed of 45 different subunits. Interacts with TMEM186. Interacts with TMEM242 (By similarity).</text>
</comment>
<comment type="subcellular location">
    <subcellularLocation>
        <location evidence="2">Mitochondrion inner membrane</location>
        <topology evidence="3">Multi-pass membrane protein</topology>
    </subcellularLocation>
</comment>
<comment type="similarity">
    <text evidence="4">Belongs to the complex I subunit 3 family.</text>
</comment>
<protein>
    <recommendedName>
        <fullName evidence="1">NADH-ubiquinone oxidoreductase chain 3</fullName>
        <ecNumber evidence="1">7.1.1.2</ecNumber>
    </recommendedName>
    <alternativeName>
        <fullName>NADH dehydrogenase subunit 3</fullName>
    </alternativeName>
</protein>
<geneLocation type="mitochondrion"/>
<reference key="1">
    <citation type="journal article" date="2006" name="Nature">
        <title>Multiplex amplification of the mammoth mitochondrial genome and the evolution of Elephantidae.</title>
        <authorList>
            <person name="Krause J."/>
            <person name="Dear P.H."/>
            <person name="Pollack J.L."/>
            <person name="Slatkin M."/>
            <person name="Spriggs H."/>
            <person name="Barnes I."/>
            <person name="Lister A.M."/>
            <person name="Ebersberger I."/>
            <person name="Paeaebo S."/>
            <person name="Hofreiter M."/>
        </authorList>
    </citation>
    <scope>NUCLEOTIDE SEQUENCE [GENOMIC DNA]</scope>
</reference>
<reference key="2">
    <citation type="submission" date="2006-11" db="EMBL/GenBank/DDBJ databases">
        <authorList>
            <person name="Krause J."/>
            <person name="Dear P.H."/>
            <person name="Pollack J.L."/>
            <person name="Slatkin M."/>
            <person name="Spriggs H."/>
            <person name="Barnes I."/>
            <person name="Lister A.M."/>
            <person name="Paabo S."/>
            <person name="Hofreiter M."/>
        </authorList>
    </citation>
    <scope>SEQUENCE REVISION TO 1</scope>
</reference>
<reference key="3">
    <citation type="journal article" date="2006" name="PLoS Biol.">
        <title>Complete mitochondrial genome and phylogeny of Pleistocene mammoth Mammuthus primigenius.</title>
        <authorList>
            <person name="Rogaev E.I."/>
            <person name="Moliaka Y.K."/>
            <person name="Malyarchuk B.A."/>
            <person name="Kondrashov F.A."/>
            <person name="Derenko M.V."/>
            <person name="Chumakov I."/>
            <person name="Grigorenko A.P."/>
        </authorList>
    </citation>
    <scope>NUCLEOTIDE SEQUENCE [GENOMIC DNA]</scope>
    <source>
        <tissue>Muscle</tissue>
    </source>
</reference>
<organism>
    <name type="scientific">Mammuthus primigenius</name>
    <name type="common">Siberian woolly mammoth</name>
    <dbReference type="NCBI Taxonomy" id="37349"/>
    <lineage>
        <taxon>Eukaryota</taxon>
        <taxon>Metazoa</taxon>
        <taxon>Chordata</taxon>
        <taxon>Craniata</taxon>
        <taxon>Vertebrata</taxon>
        <taxon>Euteleostomi</taxon>
        <taxon>Mammalia</taxon>
        <taxon>Eutheria</taxon>
        <taxon>Afrotheria</taxon>
        <taxon>Proboscidea</taxon>
        <taxon>Elephantidae</taxon>
        <taxon>Mammuthus</taxon>
    </lineage>
</organism>